<reference key="1">
    <citation type="journal article" date="2007" name="Proc. Natl. Acad. Sci. U.S.A.">
        <title>Genome sequencing and comparative analysis of Saccharomyces cerevisiae strain YJM789.</title>
        <authorList>
            <person name="Wei W."/>
            <person name="McCusker J.H."/>
            <person name="Hyman R.W."/>
            <person name="Jones T."/>
            <person name="Ning Y."/>
            <person name="Cao Z."/>
            <person name="Gu Z."/>
            <person name="Bruno D."/>
            <person name="Miranda M."/>
            <person name="Nguyen M."/>
            <person name="Wilhelmy J."/>
            <person name="Komp C."/>
            <person name="Tamse R."/>
            <person name="Wang X."/>
            <person name="Jia P."/>
            <person name="Luedi P."/>
            <person name="Oefner P.J."/>
            <person name="David L."/>
            <person name="Dietrich F.S."/>
            <person name="Li Y."/>
            <person name="Davis R.W."/>
            <person name="Steinmetz L.M."/>
        </authorList>
    </citation>
    <scope>NUCLEOTIDE SEQUENCE [LARGE SCALE GENOMIC DNA]</scope>
    <source>
        <strain>YJM789</strain>
    </source>
</reference>
<name>AIM34_YEAS7</name>
<comment type="subcellular location">
    <subcellularLocation>
        <location evidence="1">Mitochondrion membrane</location>
        <topology evidence="1">Single-pass membrane protein</topology>
    </subcellularLocation>
</comment>
<comment type="similarity">
    <text evidence="4">Belongs to the AIM34 family.</text>
</comment>
<dbReference type="EMBL" id="AAFW02000020">
    <property type="protein sequence ID" value="EDN64395.1"/>
    <property type="molecule type" value="Genomic_DNA"/>
</dbReference>
<dbReference type="SMR" id="A6ZM65"/>
<dbReference type="HOGENOM" id="CLU_119188_0_0_1"/>
<dbReference type="Proteomes" id="UP000007060">
    <property type="component" value="Unassembled WGS sequence"/>
</dbReference>
<dbReference type="GO" id="GO:0031966">
    <property type="term" value="C:mitochondrial membrane"/>
    <property type="evidence" value="ECO:0007669"/>
    <property type="project" value="UniProtKB-SubCell"/>
</dbReference>
<dbReference type="FunFam" id="1.10.720.30:FF:000034">
    <property type="entry name" value="Altered inheritance of mitochondria protein 34, mitochondrial"/>
    <property type="match status" value="1"/>
</dbReference>
<dbReference type="Gene3D" id="1.10.720.30">
    <property type="entry name" value="SAP domain"/>
    <property type="match status" value="1"/>
</dbReference>
<dbReference type="InterPro" id="IPR003034">
    <property type="entry name" value="SAP_dom"/>
</dbReference>
<dbReference type="InterPro" id="IPR036361">
    <property type="entry name" value="SAP_dom_sf"/>
</dbReference>
<dbReference type="Pfam" id="PF02037">
    <property type="entry name" value="SAP"/>
    <property type="match status" value="1"/>
</dbReference>
<dbReference type="SMART" id="SM00513">
    <property type="entry name" value="SAP"/>
    <property type="match status" value="1"/>
</dbReference>
<dbReference type="SUPFAM" id="SSF68906">
    <property type="entry name" value="SAP domain"/>
    <property type="match status" value="1"/>
</dbReference>
<dbReference type="PROSITE" id="PS50800">
    <property type="entry name" value="SAP"/>
    <property type="match status" value="1"/>
</dbReference>
<evidence type="ECO:0000250" key="1"/>
<evidence type="ECO:0000255" key="2"/>
<evidence type="ECO:0000255" key="3">
    <source>
        <dbReference type="PROSITE-ProRule" id="PRU00186"/>
    </source>
</evidence>
<evidence type="ECO:0000305" key="4"/>
<accession>A6ZM65</accession>
<protein>
    <recommendedName>
        <fullName>Altered inheritance of mitochondria protein 34, mitochondrial</fullName>
    </recommendedName>
</protein>
<keyword id="KW-0472">Membrane</keyword>
<keyword id="KW-0496">Mitochondrion</keyword>
<keyword id="KW-0809">Transit peptide</keyword>
<keyword id="KW-0812">Transmembrane</keyword>
<keyword id="KW-1133">Transmembrane helix</keyword>
<sequence length="198" mass="22742">MSISLLGRIVSQQFSGIRAAEPGRSLYLPFTLLLKQPGAYKVSLHRYVHSTQTKSHLSFLMNNNDITPFQKFTVKVLKEQCKSRGLKLSGRKSDLLQRLITHDSCSNKKSSVKINEPKKKRILINDPIKITKKLVSDKTFRTIEKNISSLQNTPVIETPCDVHSHLQPRDRIFLLGFFMLSCLWWNLEPQESKPTIDH</sequence>
<organism>
    <name type="scientific">Saccharomyces cerevisiae (strain YJM789)</name>
    <name type="common">Baker's yeast</name>
    <dbReference type="NCBI Taxonomy" id="307796"/>
    <lineage>
        <taxon>Eukaryota</taxon>
        <taxon>Fungi</taxon>
        <taxon>Dikarya</taxon>
        <taxon>Ascomycota</taxon>
        <taxon>Saccharomycotina</taxon>
        <taxon>Saccharomycetes</taxon>
        <taxon>Saccharomycetales</taxon>
        <taxon>Saccharomycetaceae</taxon>
        <taxon>Saccharomyces</taxon>
    </lineage>
</organism>
<gene>
    <name type="primary">AIM34</name>
    <name type="ORF">SCY_4177</name>
</gene>
<feature type="transit peptide" description="Mitochondrion" evidence="2">
    <location>
        <begin position="1"/>
        <end position="55"/>
    </location>
</feature>
<feature type="chain" id="PRO_0000399715" description="Altered inheritance of mitochondria protein 34, mitochondrial">
    <location>
        <begin position="56"/>
        <end position="198"/>
    </location>
</feature>
<feature type="transmembrane region" description="Helical" evidence="2">
    <location>
        <begin position="172"/>
        <end position="187"/>
    </location>
</feature>
<feature type="domain" description="SAP" evidence="3">
    <location>
        <begin position="69"/>
        <end position="103"/>
    </location>
</feature>
<proteinExistence type="inferred from homology"/>